<organism>
    <name type="scientific">Mus musculus</name>
    <name type="common">Mouse</name>
    <dbReference type="NCBI Taxonomy" id="10090"/>
    <lineage>
        <taxon>Eukaryota</taxon>
        <taxon>Metazoa</taxon>
        <taxon>Chordata</taxon>
        <taxon>Craniata</taxon>
        <taxon>Vertebrata</taxon>
        <taxon>Euteleostomi</taxon>
        <taxon>Mammalia</taxon>
        <taxon>Eutheria</taxon>
        <taxon>Euarchontoglires</taxon>
        <taxon>Glires</taxon>
        <taxon>Rodentia</taxon>
        <taxon>Myomorpha</taxon>
        <taxon>Muroidea</taxon>
        <taxon>Muridae</taxon>
        <taxon>Murinae</taxon>
        <taxon>Mus</taxon>
        <taxon>Mus</taxon>
    </lineage>
</organism>
<comment type="function">
    <text evidence="3 4 5 6">T-box transcription factor that plays an essential role in the determination of the fate of axial stem cells: neural vs mesodermal. Acts in part by down-regulating, a specific enhancer (N1) of SOX2, to inhibit neural development. Seems to play also an essential role in left/right axis determination and acts through effects on Notch signaling around the node as well as through an effect on the morphology and motility of the nodal cilia.</text>
</comment>
<comment type="subcellular location">
    <subcellularLocation>
        <location evidence="1">Nucleus</location>
    </subcellularLocation>
</comment>
<comment type="alternative products">
    <event type="alternative splicing"/>
    <isoform>
        <id>P70327-1</id>
        <name>1</name>
        <sequence type="displayed"/>
    </isoform>
    <isoform>
        <id>P70327-2</id>
        <name>2</name>
        <sequence type="described" ref="VSP_043221"/>
    </isoform>
</comment>
<comment type="developmental stage">
    <text>TBX6 is first detected in the gastrulation stage in the primitive streak and newly recruited paraxial mesoderm. Later in development it is restricted to presomitic, paraxial mesoderm and to the tail bud, which replaces the streak as the source of mesoderm.</text>
</comment>
<comment type="disruption phenotype">
    <text evidence="4 5 6">Defects in the differentiation of paraxial mesoderm. Irregular somites formed in the neck region of mutant embryos, whereas more posterior paraxial tissue did not form somites but instead differentiated along a neural pathway, forming neural-tube-like structures that flanked the axial neural tube. These paraxial tubes showed dorsal/ventral patterning that is characteristic of the neural tube and had differentiated motor neurons. Embryos lacking TBX6 show also randomization of the direction of heart looping and independent alterations in the direction of embryo turning.</text>
</comment>
<comment type="sequence caution" evidence="8">
    <conflict type="frameshift">
        <sequence resource="EMBL-CDS" id="AAC53110"/>
    </conflict>
</comment>
<proteinExistence type="evidence at transcript level"/>
<evidence type="ECO:0000255" key="1">
    <source>
        <dbReference type="PROSITE-ProRule" id="PRU00201"/>
    </source>
</evidence>
<evidence type="ECO:0000256" key="2">
    <source>
        <dbReference type="SAM" id="MobiDB-lite"/>
    </source>
</evidence>
<evidence type="ECO:0000269" key="3">
    <source>
    </source>
</evidence>
<evidence type="ECO:0000269" key="4">
    <source>
    </source>
</evidence>
<evidence type="ECO:0000269" key="5">
    <source>
    </source>
</evidence>
<evidence type="ECO:0000269" key="6">
    <source>
    </source>
</evidence>
<evidence type="ECO:0000303" key="7">
    <source>
    </source>
</evidence>
<evidence type="ECO:0000305" key="8"/>
<protein>
    <recommendedName>
        <fullName>T-box transcription factor TBX6</fullName>
        <shortName>T-box protein 6</shortName>
    </recommendedName>
</protein>
<keyword id="KW-0025">Alternative splicing</keyword>
<keyword id="KW-0217">Developmental protein</keyword>
<keyword id="KW-0238">DNA-binding</keyword>
<keyword id="KW-0539">Nucleus</keyword>
<keyword id="KW-1185">Reference proteome</keyword>
<keyword id="KW-0804">Transcription</keyword>
<keyword id="KW-0805">Transcription regulation</keyword>
<reference key="1">
    <citation type="journal article" date="1996" name="Genetics">
        <title>Evolution of mouse T-box genes by tandem duplication and cluster dispersion.</title>
        <authorList>
            <person name="Agulnik S.I."/>
            <person name="Garvey N."/>
            <person name="Hancock S."/>
            <person name="Ruvinsky I."/>
            <person name="Chapman D.L."/>
            <person name="Agulnik I."/>
            <person name="Bollag R.J."/>
            <person name="Papaioannou V.E."/>
            <person name="Silver L.M."/>
        </authorList>
    </citation>
    <scope>NUCLEOTIDE SEQUENCE [MRNA] (ISOFORM 1)</scope>
    <source>
        <tissue>Embryo</tissue>
    </source>
</reference>
<reference key="2">
    <citation type="journal article" date="1996" name="Dev. Biol.">
        <title>Tbx6, a mouse T-Box gene implicated in paraxial mesoderm formation at gastrulation.</title>
        <authorList>
            <person name="Chapman D.L."/>
            <person name="Agulnik I."/>
            <person name="Hancock S."/>
            <person name="Silver L.M."/>
            <person name="Papaioannou V.E."/>
        </authorList>
    </citation>
    <scope>NUCLEOTIDE SEQUENCE [MRNA] (ISOFORM 1)</scope>
    <source>
        <tissue>Embryo</tissue>
    </source>
</reference>
<reference key="3">
    <citation type="journal article" date="2004" name="Genes Dev.">
        <title>WNT signaling, in synergy with T/TBX6, controls Notch signaling by regulating Dll1 expression in the presomitic mesoderm of mouse embryos.</title>
        <authorList>
            <person name="Hofmann M."/>
            <person name="Schuster-Gossler K."/>
            <person name="Watabe-Rudolph M."/>
            <person name="Aulehla A."/>
            <person name="Herrmann B.G."/>
            <person name="Gossler A."/>
        </authorList>
    </citation>
    <scope>NUCLEOTIDE SEQUENCE [MRNA] (ISOFORM 1)</scope>
    <scope>FUNCTION</scope>
    <source>
        <strain>C3H/He</strain>
    </source>
</reference>
<reference key="4">
    <citation type="journal article" date="2004" name="Genome Res.">
        <title>The status, quality, and expansion of the NIH full-length cDNA project: the Mammalian Gene Collection (MGC).</title>
        <authorList>
            <consortium name="The MGC Project Team"/>
        </authorList>
    </citation>
    <scope>NUCLEOTIDE SEQUENCE [LARGE SCALE MRNA] (ISOFORM 2)</scope>
    <source>
        <tissue>Brain</tissue>
    </source>
</reference>
<reference key="5">
    <citation type="journal article" date="1998" name="Nature">
        <title>Three neural tubes in mouse embryos with mutations in the T-box gene Tbx6.</title>
        <authorList>
            <person name="Chapman D.L."/>
            <person name="Papaioannou V.E."/>
        </authorList>
    </citation>
    <scope>FUNCTION</scope>
    <scope>DISRUPTION PHENOTYPE</scope>
</reference>
<reference key="6">
    <citation type="journal article" date="2008" name="PLoS ONE">
        <title>Tbx6 regulates left/right patterning in mouse embryos through effects on nodal cilia and perinodal signaling.</title>
        <authorList>
            <person name="Hadjantonakis A.K."/>
            <person name="Pisano E."/>
            <person name="Papaioannou V.E."/>
        </authorList>
    </citation>
    <scope>FUNCTION</scope>
    <scope>DISRUPTION PHENOTYPE</scope>
</reference>
<reference key="7">
    <citation type="journal article" date="2011" name="Nature">
        <title>Tbx6-dependent Sox2 regulation determines neural or mesodermal fate in axial stem cells.</title>
        <authorList>
            <person name="Takemoto T."/>
            <person name="Uchikawa M."/>
            <person name="Yoshida M."/>
            <person name="Bell D.M."/>
            <person name="Lovell-Badge R."/>
            <person name="Papaioannou V.E."/>
            <person name="Kondoh H."/>
        </authorList>
    </citation>
    <scope>FUNCTION</scope>
    <scope>DISRUPTION PHENOTYPE</scope>
</reference>
<sequence length="436" mass="47006">MYHPRELYPSLGTGYRLGHPQPGADSTFPPALTEGYRYPDLDTSKLDCFLSGIEAAPHTLAAAAPLPLLPSALGPETAPPPPEALHSLPGVSLSLENQELWKEFSAVGTEMIITKAGRRMFPACRVSVTGLDPEARYLFLLDVVPVDGARYRWQGQHWEPSGKAEPRLPDRVYIHPDSPATGAHWMRQPVSFHRVKLTNSTLDPHGHLILHSMHKYQPRIHLVRATQLCSQHWGGVASFRFPETTFISVTAYQNPRITQLKIAANPFAKGFRENGRNCKRERDARVKRKLRGPEPVATEACGSGDTPGGPCDSTLGGDIRDSDPEQAPTPQEAASASAPPCGGPSAEAYLLHPAAFHGAPSHLPARTPSFAEAPDPGRPAPYSAAFLDLQPGPGGSAYQAAPSVPSFAPHFIQGGPFPLPYPGPGGYLDMGSKPMY</sequence>
<feature type="chain" id="PRO_0000184439" description="T-box transcription factor TBX6">
    <location>
        <begin position="1"/>
        <end position="436"/>
    </location>
</feature>
<feature type="DNA-binding region" description="T-box" evidence="1">
    <location>
        <begin position="100"/>
        <end position="273"/>
    </location>
</feature>
<feature type="region of interest" description="Disordered" evidence="2">
    <location>
        <begin position="274"/>
        <end position="344"/>
    </location>
</feature>
<feature type="region of interest" description="Disordered" evidence="2">
    <location>
        <begin position="360"/>
        <end position="383"/>
    </location>
</feature>
<feature type="compositionally biased region" description="Basic and acidic residues" evidence="2">
    <location>
        <begin position="274"/>
        <end position="284"/>
    </location>
</feature>
<feature type="compositionally biased region" description="Low complexity" evidence="2">
    <location>
        <begin position="332"/>
        <end position="344"/>
    </location>
</feature>
<feature type="splice variant" id="VSP_043221" description="In isoform 2." evidence="7">
    <original>ERDARVKRKLRGPEPVATEACGSG</original>
    <variation>WASFIQGMLTNYCVPGTVPGYQEHD</variation>
    <location>
        <begin position="281"/>
        <end position="304"/>
    </location>
</feature>
<feature type="sequence conflict" description="In Ref. 1; AAC53110." evidence="8" ref="1">
    <original>QH</original>
    <variation>PD</variation>
    <location>
        <begin position="156"/>
        <end position="157"/>
    </location>
</feature>
<feature type="sequence conflict" description="In Ref. 1; AAC53110 and 4; AAI40952." evidence="8" ref="1 4">
    <original>Q</original>
    <variation>R</variation>
    <location>
        <position position="331"/>
    </location>
</feature>
<feature type="sequence conflict" description="In Ref. 1; AAC53110." evidence="8" ref="1">
    <original>F</original>
    <variation>L</variation>
    <location>
        <position position="370"/>
    </location>
</feature>
<gene>
    <name type="primary">Tbx6</name>
</gene>
<name>TBX6_MOUSE</name>
<accession>P70327</accession>
<accession>B2RU37</accession>
<accession>Q5SDA2</accession>
<dbReference type="EMBL" id="U57331">
    <property type="protein sequence ID" value="AAC53110.1"/>
    <property type="status" value="ALT_FRAME"/>
    <property type="molecule type" value="mRNA"/>
</dbReference>
<dbReference type="EMBL" id="AY654733">
    <property type="protein sequence ID" value="AAT72924.1"/>
    <property type="molecule type" value="mRNA"/>
</dbReference>
<dbReference type="EMBL" id="BC140951">
    <property type="protein sequence ID" value="AAI40952.1"/>
    <property type="molecule type" value="mRNA"/>
</dbReference>
<dbReference type="CCDS" id="CCDS21843.1">
    <molecule id="P70327-1"/>
</dbReference>
<dbReference type="PIR" id="S72233">
    <property type="entry name" value="S72233"/>
</dbReference>
<dbReference type="RefSeq" id="NP_035668.2">
    <molecule id="P70327-1"/>
    <property type="nucleotide sequence ID" value="NM_011538.2"/>
</dbReference>
<dbReference type="SMR" id="P70327"/>
<dbReference type="BioGRID" id="203991">
    <property type="interactions" value="1"/>
</dbReference>
<dbReference type="FunCoup" id="P70327">
    <property type="interactions" value="937"/>
</dbReference>
<dbReference type="IntAct" id="P70327">
    <property type="interactions" value="2"/>
</dbReference>
<dbReference type="STRING" id="10090.ENSMUSP00000091579"/>
<dbReference type="GlyGen" id="P70327">
    <property type="glycosylation" value="3 sites"/>
</dbReference>
<dbReference type="iPTMnet" id="P70327"/>
<dbReference type="PhosphoSitePlus" id="P70327"/>
<dbReference type="PaxDb" id="10090-ENSMUSP00000091579"/>
<dbReference type="Antibodypedia" id="13514">
    <property type="antibodies" value="390 antibodies from 31 providers"/>
</dbReference>
<dbReference type="DNASU" id="21389"/>
<dbReference type="Ensembl" id="ENSMUST00000094037.5">
    <molecule id="P70327-1"/>
    <property type="protein sequence ID" value="ENSMUSP00000091579.5"/>
    <property type="gene ID" value="ENSMUSG00000030699.17"/>
</dbReference>
<dbReference type="Ensembl" id="ENSMUST00000172352.8">
    <molecule id="P70327-2"/>
    <property type="protein sequence ID" value="ENSMUSP00000126418.2"/>
    <property type="gene ID" value="ENSMUSG00000030699.17"/>
</dbReference>
<dbReference type="GeneID" id="21389"/>
<dbReference type="KEGG" id="mmu:21389"/>
<dbReference type="UCSC" id="uc009jsr.1">
    <molecule id="P70327-1"/>
    <property type="organism name" value="mouse"/>
</dbReference>
<dbReference type="UCSC" id="uc012ftu.1">
    <molecule id="P70327-2"/>
    <property type="organism name" value="mouse"/>
</dbReference>
<dbReference type="AGR" id="MGI:102539"/>
<dbReference type="CTD" id="6911"/>
<dbReference type="MGI" id="MGI:102539">
    <property type="gene designation" value="Tbx6"/>
</dbReference>
<dbReference type="VEuPathDB" id="HostDB:ENSMUSG00000030699"/>
<dbReference type="eggNOG" id="KOG3585">
    <property type="taxonomic scope" value="Eukaryota"/>
</dbReference>
<dbReference type="GeneTree" id="ENSGT00940000160732"/>
<dbReference type="HOGENOM" id="CLU_052181_0_0_1"/>
<dbReference type="InParanoid" id="P70327"/>
<dbReference type="OMA" id="CSRHWGG"/>
<dbReference type="OrthoDB" id="71762at9989"/>
<dbReference type="TreeFam" id="TF106341"/>
<dbReference type="BioGRID-ORCS" id="21389">
    <property type="hits" value="3 hits in 77 CRISPR screens"/>
</dbReference>
<dbReference type="PRO" id="PR:P70327"/>
<dbReference type="Proteomes" id="UP000000589">
    <property type="component" value="Chromosome 7"/>
</dbReference>
<dbReference type="RNAct" id="P70327">
    <property type="molecule type" value="protein"/>
</dbReference>
<dbReference type="Bgee" id="ENSMUSG00000030699">
    <property type="expression patterns" value="Expressed in embryonic post-anal tail and 82 other cell types or tissues"/>
</dbReference>
<dbReference type="GO" id="GO:0000785">
    <property type="term" value="C:chromatin"/>
    <property type="evidence" value="ECO:0000314"/>
    <property type="project" value="BHF-UCL"/>
</dbReference>
<dbReference type="GO" id="GO:0005654">
    <property type="term" value="C:nucleoplasm"/>
    <property type="evidence" value="ECO:0000304"/>
    <property type="project" value="Reactome"/>
</dbReference>
<dbReference type="GO" id="GO:0005634">
    <property type="term" value="C:nucleus"/>
    <property type="evidence" value="ECO:0000314"/>
    <property type="project" value="MGI"/>
</dbReference>
<dbReference type="GO" id="GO:0001227">
    <property type="term" value="F:DNA-binding transcription repressor activity, RNA polymerase II-specific"/>
    <property type="evidence" value="ECO:0000305"/>
    <property type="project" value="NTNU_SB"/>
</dbReference>
<dbReference type="GO" id="GO:0000978">
    <property type="term" value="F:RNA polymerase II cis-regulatory region sequence-specific DNA binding"/>
    <property type="evidence" value="ECO:0000314"/>
    <property type="project" value="NTNU_SB"/>
</dbReference>
<dbReference type="GO" id="GO:0061629">
    <property type="term" value="F:RNA polymerase II-specific DNA-binding transcription factor binding"/>
    <property type="evidence" value="ECO:0000353"/>
    <property type="project" value="BHF-UCL"/>
</dbReference>
<dbReference type="GO" id="GO:0003714">
    <property type="term" value="F:transcription corepressor activity"/>
    <property type="evidence" value="ECO:0000314"/>
    <property type="project" value="BHF-UCL"/>
</dbReference>
<dbReference type="GO" id="GO:0001707">
    <property type="term" value="P:mesoderm formation"/>
    <property type="evidence" value="ECO:0000315"/>
    <property type="project" value="MGI"/>
</dbReference>
<dbReference type="GO" id="GO:0007501">
    <property type="term" value="P:mesodermal cell fate specification"/>
    <property type="evidence" value="ECO:0000315"/>
    <property type="project" value="MGI"/>
</dbReference>
<dbReference type="GO" id="GO:0014043">
    <property type="term" value="P:negative regulation of neuron maturation"/>
    <property type="evidence" value="ECO:0000316"/>
    <property type="project" value="MGI"/>
</dbReference>
<dbReference type="GO" id="GO:0010977">
    <property type="term" value="P:negative regulation of neuron projection development"/>
    <property type="evidence" value="ECO:0000316"/>
    <property type="project" value="MGI"/>
</dbReference>
<dbReference type="GO" id="GO:0000122">
    <property type="term" value="P:negative regulation of transcription by RNA polymerase II"/>
    <property type="evidence" value="ECO:0000314"/>
    <property type="project" value="BHF-UCL"/>
</dbReference>
<dbReference type="GO" id="GO:0045944">
    <property type="term" value="P:positive regulation of transcription by RNA polymerase II"/>
    <property type="evidence" value="ECO:0000314"/>
    <property type="project" value="MGI"/>
</dbReference>
<dbReference type="GO" id="GO:0023019">
    <property type="term" value="P:signal transduction involved in regulation of gene expression"/>
    <property type="evidence" value="ECO:0000314"/>
    <property type="project" value="MGI"/>
</dbReference>
<dbReference type="GO" id="GO:0032525">
    <property type="term" value="P:somite rostral/caudal axis specification"/>
    <property type="evidence" value="ECO:0000314"/>
    <property type="project" value="MGI"/>
</dbReference>
<dbReference type="CDD" id="cd20196">
    <property type="entry name" value="T-box_TBX6"/>
    <property type="match status" value="1"/>
</dbReference>
<dbReference type="FunFam" id="2.60.40.820:FF:000007">
    <property type="entry name" value="T-box transcription factor"/>
    <property type="match status" value="1"/>
</dbReference>
<dbReference type="Gene3D" id="2.60.40.820">
    <property type="entry name" value="Transcription factor, T-box"/>
    <property type="match status" value="1"/>
</dbReference>
<dbReference type="InterPro" id="IPR008967">
    <property type="entry name" value="p53-like_TF_DNA-bd_sf"/>
</dbReference>
<dbReference type="InterPro" id="IPR046360">
    <property type="entry name" value="T-box_DNA-bd"/>
</dbReference>
<dbReference type="InterPro" id="IPR036960">
    <property type="entry name" value="T-box_sf"/>
</dbReference>
<dbReference type="InterPro" id="IPR002070">
    <property type="entry name" value="TF_Brachyury"/>
</dbReference>
<dbReference type="InterPro" id="IPR001699">
    <property type="entry name" value="TF_T-box"/>
</dbReference>
<dbReference type="InterPro" id="IPR018186">
    <property type="entry name" value="TF_T-box_CS"/>
</dbReference>
<dbReference type="PANTHER" id="PTHR11267">
    <property type="entry name" value="T-BOX PROTEIN-RELATED"/>
    <property type="match status" value="1"/>
</dbReference>
<dbReference type="PANTHER" id="PTHR11267:SF100">
    <property type="entry name" value="T-BOX TRANSCRIPTION FACTOR TBX6"/>
    <property type="match status" value="1"/>
</dbReference>
<dbReference type="Pfam" id="PF00907">
    <property type="entry name" value="T-box"/>
    <property type="match status" value="1"/>
</dbReference>
<dbReference type="PRINTS" id="PR00938">
    <property type="entry name" value="BRACHYURY"/>
</dbReference>
<dbReference type="PRINTS" id="PR00937">
    <property type="entry name" value="TBOX"/>
</dbReference>
<dbReference type="SMART" id="SM00425">
    <property type="entry name" value="TBOX"/>
    <property type="match status" value="1"/>
</dbReference>
<dbReference type="SUPFAM" id="SSF49417">
    <property type="entry name" value="p53-like transcription factors"/>
    <property type="match status" value="1"/>
</dbReference>
<dbReference type="PROSITE" id="PS01283">
    <property type="entry name" value="TBOX_1"/>
    <property type="match status" value="1"/>
</dbReference>
<dbReference type="PROSITE" id="PS01264">
    <property type="entry name" value="TBOX_2"/>
    <property type="match status" value="1"/>
</dbReference>
<dbReference type="PROSITE" id="PS50252">
    <property type="entry name" value="TBOX_3"/>
    <property type="match status" value="1"/>
</dbReference>